<protein>
    <recommendedName>
        <fullName evidence="1">Biotin synthase</fullName>
        <ecNumber evidence="1">2.8.1.6</ecNumber>
    </recommendedName>
</protein>
<comment type="function">
    <text evidence="1">Catalyzes the conversion of dethiobiotin (DTB) to biotin by the insertion of a sulfur atom into dethiobiotin via a radical-based mechanism.</text>
</comment>
<comment type="catalytic activity">
    <reaction evidence="1">
        <text>(4R,5S)-dethiobiotin + (sulfur carrier)-SH + 2 reduced [2Fe-2S]-[ferredoxin] + 2 S-adenosyl-L-methionine = (sulfur carrier)-H + biotin + 2 5'-deoxyadenosine + 2 L-methionine + 2 oxidized [2Fe-2S]-[ferredoxin]</text>
        <dbReference type="Rhea" id="RHEA:22060"/>
        <dbReference type="Rhea" id="RHEA-COMP:10000"/>
        <dbReference type="Rhea" id="RHEA-COMP:10001"/>
        <dbReference type="Rhea" id="RHEA-COMP:14737"/>
        <dbReference type="Rhea" id="RHEA-COMP:14739"/>
        <dbReference type="ChEBI" id="CHEBI:17319"/>
        <dbReference type="ChEBI" id="CHEBI:29917"/>
        <dbReference type="ChEBI" id="CHEBI:33737"/>
        <dbReference type="ChEBI" id="CHEBI:33738"/>
        <dbReference type="ChEBI" id="CHEBI:57586"/>
        <dbReference type="ChEBI" id="CHEBI:57844"/>
        <dbReference type="ChEBI" id="CHEBI:59789"/>
        <dbReference type="ChEBI" id="CHEBI:64428"/>
        <dbReference type="ChEBI" id="CHEBI:149473"/>
        <dbReference type="EC" id="2.8.1.6"/>
    </reaction>
</comment>
<comment type="cofactor">
    <cofactor evidence="1">
        <name>[4Fe-4S] cluster</name>
        <dbReference type="ChEBI" id="CHEBI:49883"/>
    </cofactor>
    <text evidence="1">Binds 1 [4Fe-4S] cluster. The cluster is coordinated with 3 cysteines and an exchangeable S-adenosyl-L-methionine.</text>
</comment>
<comment type="cofactor">
    <cofactor evidence="1">
        <name>[2Fe-2S] cluster</name>
        <dbReference type="ChEBI" id="CHEBI:190135"/>
    </cofactor>
    <text evidence="1">Binds 1 [2Fe-2S] cluster. The cluster is coordinated with 3 cysteines and 1 arginine.</text>
</comment>
<comment type="pathway">
    <text evidence="1">Cofactor biosynthesis; biotin biosynthesis; biotin from 7,8-diaminononanoate: step 2/2.</text>
</comment>
<comment type="subunit">
    <text evidence="1">Homodimer.</text>
</comment>
<comment type="similarity">
    <text evidence="1">Belongs to the radical SAM superfamily. Biotin synthase family.</text>
</comment>
<comment type="sequence caution" evidence="3">
    <conflict type="erroneous initiation">
        <sequence resource="EMBL-CDS" id="BAF71047"/>
    </conflict>
</comment>
<gene>
    <name evidence="1" type="primary">bioB</name>
    <name type="ordered locus">SUN_0087</name>
</gene>
<keyword id="KW-0001">2Fe-2S</keyword>
<keyword id="KW-0004">4Fe-4S</keyword>
<keyword id="KW-0093">Biotin biosynthesis</keyword>
<keyword id="KW-0408">Iron</keyword>
<keyword id="KW-0411">Iron-sulfur</keyword>
<keyword id="KW-0479">Metal-binding</keyword>
<keyword id="KW-0949">S-adenosyl-L-methionine</keyword>
<keyword id="KW-0808">Transferase</keyword>
<sequence length="285" mass="31480">MSTRKQIFLCAINNILSGTCKEDCKFCTQSVRYHADIERYSYKKIGQIVEEARQAKANGALGYCLVTAGKGLDDKKVDFVARAAQAVKAEVEGLNLIACNGTASLEQLIYLKEHGIDSYNHNLETSERYYPEICLTHGWQERYETCENVKSSGLALCSGGIFGMGESMKDREDLLSAIASLQPESTPLNFYHPNPALPIKTRNIGFEEALNIIRRAHTLLGEDRLLMVAGGRELLFNGKEDEMFKAGANSIVIGDYLTTSGSAPKMDQLMLEKLGYEVATSCDSH</sequence>
<reference key="1">
    <citation type="journal article" date="2007" name="Proc. Natl. Acad. Sci. U.S.A.">
        <title>Deep-sea vent epsilon-proteobacterial genomes provide insights into emergence of pathogens.</title>
        <authorList>
            <person name="Nakagawa S."/>
            <person name="Takaki Y."/>
            <person name="Shimamura S."/>
            <person name="Reysenbach A.-L."/>
            <person name="Takai K."/>
            <person name="Horikoshi K."/>
        </authorList>
    </citation>
    <scope>NUCLEOTIDE SEQUENCE [LARGE SCALE GENOMIC DNA]</scope>
    <source>
        <strain>NBC37-1</strain>
    </source>
</reference>
<evidence type="ECO:0000255" key="1">
    <source>
        <dbReference type="HAMAP-Rule" id="MF_01694"/>
    </source>
</evidence>
<evidence type="ECO:0000255" key="2">
    <source>
        <dbReference type="PROSITE-ProRule" id="PRU01266"/>
    </source>
</evidence>
<evidence type="ECO:0000305" key="3"/>
<organism>
    <name type="scientific">Sulfurovum sp. (strain NBC37-1)</name>
    <dbReference type="NCBI Taxonomy" id="387093"/>
    <lineage>
        <taxon>Bacteria</taxon>
        <taxon>Pseudomonadati</taxon>
        <taxon>Campylobacterota</taxon>
        <taxon>Epsilonproteobacteria</taxon>
        <taxon>Campylobacterales</taxon>
        <taxon>Sulfurovaceae</taxon>
        <taxon>Sulfurovum</taxon>
    </lineage>
</organism>
<feature type="chain" id="PRO_0000381669" description="Biotin synthase">
    <location>
        <begin position="1"/>
        <end position="285"/>
    </location>
</feature>
<feature type="domain" description="Radical SAM core" evidence="2">
    <location>
        <begin position="2"/>
        <end position="223"/>
    </location>
</feature>
<feature type="binding site" evidence="1">
    <location>
        <position position="20"/>
    </location>
    <ligand>
        <name>[4Fe-4S] cluster</name>
        <dbReference type="ChEBI" id="CHEBI:49883"/>
        <note>4Fe-4S-S-AdoMet</note>
    </ligand>
</feature>
<feature type="binding site" evidence="1">
    <location>
        <position position="24"/>
    </location>
    <ligand>
        <name>[4Fe-4S] cluster</name>
        <dbReference type="ChEBI" id="CHEBI:49883"/>
        <note>4Fe-4S-S-AdoMet</note>
    </ligand>
</feature>
<feature type="binding site" evidence="1">
    <location>
        <position position="27"/>
    </location>
    <ligand>
        <name>[4Fe-4S] cluster</name>
        <dbReference type="ChEBI" id="CHEBI:49883"/>
        <note>4Fe-4S-S-AdoMet</note>
    </ligand>
</feature>
<feature type="binding site" evidence="1">
    <location>
        <position position="64"/>
    </location>
    <ligand>
        <name>[2Fe-2S] cluster</name>
        <dbReference type="ChEBI" id="CHEBI:190135"/>
    </ligand>
</feature>
<feature type="binding site" evidence="1">
    <location>
        <position position="99"/>
    </location>
    <ligand>
        <name>[2Fe-2S] cluster</name>
        <dbReference type="ChEBI" id="CHEBI:190135"/>
    </ligand>
</feature>
<feature type="binding site" evidence="1">
    <location>
        <position position="157"/>
    </location>
    <ligand>
        <name>[2Fe-2S] cluster</name>
        <dbReference type="ChEBI" id="CHEBI:190135"/>
    </ligand>
</feature>
<accession>A6Q6D8</accession>
<name>BIOB_SULNB</name>
<dbReference type="EC" id="2.8.1.6" evidence="1"/>
<dbReference type="EMBL" id="AP009179">
    <property type="protein sequence ID" value="BAF71047.1"/>
    <property type="status" value="ALT_INIT"/>
    <property type="molecule type" value="Genomic_DNA"/>
</dbReference>
<dbReference type="RefSeq" id="WP_041672621.1">
    <property type="nucleotide sequence ID" value="NC_009663.1"/>
</dbReference>
<dbReference type="SMR" id="A6Q6D8"/>
<dbReference type="STRING" id="387093.SUN_0087"/>
<dbReference type="KEGG" id="sun:SUN_0087"/>
<dbReference type="eggNOG" id="COG0502">
    <property type="taxonomic scope" value="Bacteria"/>
</dbReference>
<dbReference type="HOGENOM" id="CLU_033172_2_1_7"/>
<dbReference type="OrthoDB" id="9786826at2"/>
<dbReference type="UniPathway" id="UPA00078">
    <property type="reaction ID" value="UER00162"/>
</dbReference>
<dbReference type="Proteomes" id="UP000006378">
    <property type="component" value="Chromosome"/>
</dbReference>
<dbReference type="GO" id="GO:0051537">
    <property type="term" value="F:2 iron, 2 sulfur cluster binding"/>
    <property type="evidence" value="ECO:0007669"/>
    <property type="project" value="UniProtKB-KW"/>
</dbReference>
<dbReference type="GO" id="GO:0051539">
    <property type="term" value="F:4 iron, 4 sulfur cluster binding"/>
    <property type="evidence" value="ECO:0007669"/>
    <property type="project" value="UniProtKB-KW"/>
</dbReference>
<dbReference type="GO" id="GO:0004076">
    <property type="term" value="F:biotin synthase activity"/>
    <property type="evidence" value="ECO:0007669"/>
    <property type="project" value="UniProtKB-UniRule"/>
</dbReference>
<dbReference type="GO" id="GO:0005506">
    <property type="term" value="F:iron ion binding"/>
    <property type="evidence" value="ECO:0007669"/>
    <property type="project" value="UniProtKB-UniRule"/>
</dbReference>
<dbReference type="GO" id="GO:0009102">
    <property type="term" value="P:biotin biosynthetic process"/>
    <property type="evidence" value="ECO:0007669"/>
    <property type="project" value="UniProtKB-UniRule"/>
</dbReference>
<dbReference type="CDD" id="cd01335">
    <property type="entry name" value="Radical_SAM"/>
    <property type="match status" value="1"/>
</dbReference>
<dbReference type="Gene3D" id="3.20.20.70">
    <property type="entry name" value="Aldolase class I"/>
    <property type="match status" value="1"/>
</dbReference>
<dbReference type="HAMAP" id="MF_01694">
    <property type="entry name" value="BioB"/>
    <property type="match status" value="1"/>
</dbReference>
<dbReference type="InterPro" id="IPR013785">
    <property type="entry name" value="Aldolase_TIM"/>
</dbReference>
<dbReference type="InterPro" id="IPR010722">
    <property type="entry name" value="BATS_dom"/>
</dbReference>
<dbReference type="InterPro" id="IPR002684">
    <property type="entry name" value="Biotin_synth/BioAB"/>
</dbReference>
<dbReference type="InterPro" id="IPR024177">
    <property type="entry name" value="Biotin_synthase"/>
</dbReference>
<dbReference type="InterPro" id="IPR006638">
    <property type="entry name" value="Elp3/MiaA/NifB-like_rSAM"/>
</dbReference>
<dbReference type="InterPro" id="IPR007197">
    <property type="entry name" value="rSAM"/>
</dbReference>
<dbReference type="NCBIfam" id="TIGR00433">
    <property type="entry name" value="bioB"/>
    <property type="match status" value="1"/>
</dbReference>
<dbReference type="NCBIfam" id="NF006308">
    <property type="entry name" value="PRK08508.1"/>
    <property type="match status" value="1"/>
</dbReference>
<dbReference type="PANTHER" id="PTHR22976">
    <property type="entry name" value="BIOTIN SYNTHASE"/>
    <property type="match status" value="1"/>
</dbReference>
<dbReference type="PANTHER" id="PTHR22976:SF2">
    <property type="entry name" value="BIOTIN SYNTHASE, MITOCHONDRIAL"/>
    <property type="match status" value="1"/>
</dbReference>
<dbReference type="Pfam" id="PF06968">
    <property type="entry name" value="BATS"/>
    <property type="match status" value="1"/>
</dbReference>
<dbReference type="Pfam" id="PF04055">
    <property type="entry name" value="Radical_SAM"/>
    <property type="match status" value="1"/>
</dbReference>
<dbReference type="PIRSF" id="PIRSF001619">
    <property type="entry name" value="Biotin_synth"/>
    <property type="match status" value="1"/>
</dbReference>
<dbReference type="SFLD" id="SFLDG01060">
    <property type="entry name" value="BATS_domain_containing"/>
    <property type="match status" value="1"/>
</dbReference>
<dbReference type="SFLD" id="SFLDG01278">
    <property type="entry name" value="biotin_synthase_like"/>
    <property type="match status" value="1"/>
</dbReference>
<dbReference type="SMART" id="SM00876">
    <property type="entry name" value="BATS"/>
    <property type="match status" value="1"/>
</dbReference>
<dbReference type="SMART" id="SM00729">
    <property type="entry name" value="Elp3"/>
    <property type="match status" value="1"/>
</dbReference>
<dbReference type="SUPFAM" id="SSF102114">
    <property type="entry name" value="Radical SAM enzymes"/>
    <property type="match status" value="1"/>
</dbReference>
<dbReference type="PROSITE" id="PS51918">
    <property type="entry name" value="RADICAL_SAM"/>
    <property type="match status" value="1"/>
</dbReference>
<proteinExistence type="inferred from homology"/>